<comment type="function">
    <text evidence="1">Ubiquitin thioesterase that acts at the late endosome/prevacuolar compartment to recover ubiquitin from ubiquitinated membrane proteins en route to the vacuole. Also removes ubiquitin from soluble proteins targeted to proteasomes. Is essential to maintain a normal level of free ubiquitin. Required for promoting coordination of DNA replication and avoids DNA overreplication (By similarity).</text>
</comment>
<comment type="catalytic activity">
    <reaction>
        <text>Thiol-dependent hydrolysis of ester, thioester, amide, peptide and isopeptide bonds formed by the C-terminal Gly of ubiquitin (a 76-residue protein attached to proteins as an intracellular targeting signal).</text>
        <dbReference type="EC" id="3.4.19.12"/>
    </reaction>
</comment>
<comment type="activity regulation">
    <text evidence="1">RFU1 is an inhibitor of deubiquitination activity.</text>
</comment>
<comment type="subcellular location">
    <subcellularLocation>
        <location evidence="1">Cytoplasm</location>
    </subcellularLocation>
    <subcellularLocation>
        <location evidence="1">Late endosome membrane</location>
        <topology evidence="1">Peripheral membrane protein</topology>
    </subcellularLocation>
</comment>
<comment type="similarity">
    <text evidence="6">Belongs to the peptidase C19 family.</text>
</comment>
<sequence>MVEVDSRKQLLYDPIVRLSGIADKFVMQDATSSNMKVSLQECIDTLANYQDECKKLKRNEPTLSPSERYSIYESAYIYYKIIHIMVLTRIPSLPQFSSAKSSDATNEDKELMQIYNMLVKTLLSDEKIAQIKSYLRANYPDKNSKGKESIVNKQLLNNEVFMLPLSGSPISAVQLNHLIQMYDSSLLLIDVRPRAEFDSKHIKAKSVICVEPVSFKNSFTDLEVEKKSLITSPQKEIALFQARDKYNYIVIYTQQSEKTQFYMHQQLVLLDILMNKSFAKPLNEKNIKVFTLDKGFSGWVSKKGACETTTQNGDAIYISGNTSSLNLQNLPQLSPNIGSSMDKSMRDMMSTSADFEGRTYQLPQQQQPVFARTPSFKNLFNKAKSSSTSSVTSSSPAPSQLVRPQTSSMPPLEQNFTQYPETPKLLTQINTNTMPLSQISPISSRAMSPMTKNMLTQSPQLPMKISRTTIGNGAMLDLKPHPDSKPPGQPVPALPQLPHHMTGTYQNLNQPKLDLDFTVGLENMGNSCYMNCIIQCLLSTHELSQIFLNNSYEKHINLNSKLGSKGVLAKYFARLVHTMYREGSFKRPLEKNKPIQPIQFKMACGSINSLFKDNTQQDSQEFCQFLLDGLHEDLNQCGANPPLKELSEDAEKMREKLSMRIASSIEWERFLTTDFSVIVDLFQGQYASQLKCKVCGCTSTTYQTFSVLSVPVPHVSSCHILDCFNEFTKVEKLGTDELWSCPTCKKKQPSTKKLTITRLPRNLIIHLKRFDNMMNKNNVFVKYPFLLDLTPYWANDFDGRLPPGVTDELPTRGQVPPFRYKLNAVASHVGSLYGGHYTAYVNKGINRGWHYFDDTSYRPIKNETECITPNAYVLFYHRVYGV</sequence>
<proteinExistence type="inferred from homology"/>
<accession>A7TGY3</accession>
<organism>
    <name type="scientific">Vanderwaltozyma polyspora (strain ATCC 22028 / DSM 70294 / BCRC 21397 / CBS 2163 / NBRC 10782 / NRRL Y-8283 / UCD 57-17)</name>
    <name type="common">Kluyveromyces polysporus</name>
    <dbReference type="NCBI Taxonomy" id="436907"/>
    <lineage>
        <taxon>Eukaryota</taxon>
        <taxon>Fungi</taxon>
        <taxon>Dikarya</taxon>
        <taxon>Ascomycota</taxon>
        <taxon>Saccharomycotina</taxon>
        <taxon>Saccharomycetes</taxon>
        <taxon>Saccharomycetales</taxon>
        <taxon>Saccharomycetaceae</taxon>
        <taxon>Vanderwaltozyma</taxon>
    </lineage>
</organism>
<dbReference type="EC" id="3.4.19.12"/>
<dbReference type="EMBL" id="DS480389">
    <property type="protein sequence ID" value="EDO18435.1"/>
    <property type="molecule type" value="Genomic_DNA"/>
</dbReference>
<dbReference type="RefSeq" id="XP_001646293.1">
    <property type="nucleotide sequence ID" value="XM_001646243.1"/>
</dbReference>
<dbReference type="SMR" id="A7TGY3"/>
<dbReference type="FunCoup" id="A7TGY3">
    <property type="interactions" value="161"/>
</dbReference>
<dbReference type="STRING" id="436907.A7TGY3"/>
<dbReference type="MEROPS" id="C19.005"/>
<dbReference type="GeneID" id="5546722"/>
<dbReference type="KEGG" id="vpo:Kpol_1032p28"/>
<dbReference type="eggNOG" id="KOG1868">
    <property type="taxonomic scope" value="Eukaryota"/>
</dbReference>
<dbReference type="HOGENOM" id="CLU_005922_1_0_1"/>
<dbReference type="InParanoid" id="A7TGY3"/>
<dbReference type="OMA" id="SIEWERY"/>
<dbReference type="OrthoDB" id="292964at2759"/>
<dbReference type="PhylomeDB" id="A7TGY3"/>
<dbReference type="Proteomes" id="UP000000267">
    <property type="component" value="Unassembled WGS sequence"/>
</dbReference>
<dbReference type="GO" id="GO:0031902">
    <property type="term" value="C:late endosome membrane"/>
    <property type="evidence" value="ECO:0007669"/>
    <property type="project" value="UniProtKB-SubCell"/>
</dbReference>
<dbReference type="GO" id="GO:0000502">
    <property type="term" value="C:proteasome complex"/>
    <property type="evidence" value="ECO:0007669"/>
    <property type="project" value="EnsemblFungi"/>
</dbReference>
<dbReference type="GO" id="GO:0004843">
    <property type="term" value="F:cysteine-type deubiquitinase activity"/>
    <property type="evidence" value="ECO:0007669"/>
    <property type="project" value="UniProtKB-EC"/>
</dbReference>
<dbReference type="GO" id="GO:1904669">
    <property type="term" value="P:ATP export"/>
    <property type="evidence" value="ECO:0007669"/>
    <property type="project" value="EnsemblFungi"/>
</dbReference>
<dbReference type="GO" id="GO:0006897">
    <property type="term" value="P:endocytosis"/>
    <property type="evidence" value="ECO:0007669"/>
    <property type="project" value="EnsemblFungi"/>
</dbReference>
<dbReference type="GO" id="GO:0010995">
    <property type="term" value="P:free ubiquitin chain depolymerization"/>
    <property type="evidence" value="ECO:0007669"/>
    <property type="project" value="EnsemblFungi"/>
</dbReference>
<dbReference type="GO" id="GO:0070676">
    <property type="term" value="P:intralumenal vesicle formation"/>
    <property type="evidence" value="ECO:0007669"/>
    <property type="project" value="EnsemblFungi"/>
</dbReference>
<dbReference type="GO" id="GO:0016579">
    <property type="term" value="P:protein deubiquitination"/>
    <property type="evidence" value="ECO:0007669"/>
    <property type="project" value="InterPro"/>
</dbReference>
<dbReference type="GO" id="GO:0006275">
    <property type="term" value="P:regulation of DNA replication"/>
    <property type="evidence" value="ECO:0007669"/>
    <property type="project" value="EnsemblFungi"/>
</dbReference>
<dbReference type="GO" id="GO:0043162">
    <property type="term" value="P:ubiquitin-dependent protein catabolic process via the multivesicular body sorting pathway"/>
    <property type="evidence" value="ECO:0007669"/>
    <property type="project" value="EnsemblFungi"/>
</dbReference>
<dbReference type="CDD" id="cd02674">
    <property type="entry name" value="Peptidase_C19R"/>
    <property type="match status" value="1"/>
</dbReference>
<dbReference type="FunFam" id="3.90.70.10:FF:000115">
    <property type="entry name" value="DOA4p Ubiquitin hydrolase"/>
    <property type="match status" value="1"/>
</dbReference>
<dbReference type="Gene3D" id="3.90.70.10">
    <property type="entry name" value="Cysteine proteinases"/>
    <property type="match status" value="1"/>
</dbReference>
<dbReference type="Gene3D" id="3.40.250.10">
    <property type="entry name" value="Rhodanese-like domain"/>
    <property type="match status" value="1"/>
</dbReference>
<dbReference type="InterPro" id="IPR038765">
    <property type="entry name" value="Papain-like_cys_pep_sf"/>
</dbReference>
<dbReference type="InterPro" id="IPR001394">
    <property type="entry name" value="Peptidase_C19_UCH"/>
</dbReference>
<dbReference type="InterPro" id="IPR001763">
    <property type="entry name" value="Rhodanese-like_dom"/>
</dbReference>
<dbReference type="InterPro" id="IPR036873">
    <property type="entry name" value="Rhodanese-like_dom_sf"/>
</dbReference>
<dbReference type="InterPro" id="IPR050185">
    <property type="entry name" value="Ub_carboxyl-term_hydrolase"/>
</dbReference>
<dbReference type="InterPro" id="IPR018200">
    <property type="entry name" value="USP_CS"/>
</dbReference>
<dbReference type="InterPro" id="IPR028889">
    <property type="entry name" value="USP_dom"/>
</dbReference>
<dbReference type="PANTHER" id="PTHR21646">
    <property type="entry name" value="UBIQUITIN CARBOXYL-TERMINAL HYDROLASE"/>
    <property type="match status" value="1"/>
</dbReference>
<dbReference type="PANTHER" id="PTHR21646:SF95">
    <property type="entry name" value="UBIQUITIN CARBOXYL-TERMINAL HYDROLASE 4-RELATED"/>
    <property type="match status" value="1"/>
</dbReference>
<dbReference type="Pfam" id="PF00581">
    <property type="entry name" value="Rhodanese"/>
    <property type="match status" value="1"/>
</dbReference>
<dbReference type="Pfam" id="PF00443">
    <property type="entry name" value="UCH"/>
    <property type="match status" value="1"/>
</dbReference>
<dbReference type="SMART" id="SM00450">
    <property type="entry name" value="RHOD"/>
    <property type="match status" value="1"/>
</dbReference>
<dbReference type="SUPFAM" id="SSF54001">
    <property type="entry name" value="Cysteine proteinases"/>
    <property type="match status" value="1"/>
</dbReference>
<dbReference type="SUPFAM" id="SSF52821">
    <property type="entry name" value="Rhodanese/Cell cycle control phosphatase"/>
    <property type="match status" value="1"/>
</dbReference>
<dbReference type="PROSITE" id="PS50206">
    <property type="entry name" value="RHODANESE_3"/>
    <property type="match status" value="1"/>
</dbReference>
<dbReference type="PROSITE" id="PS00972">
    <property type="entry name" value="USP_1"/>
    <property type="match status" value="1"/>
</dbReference>
<dbReference type="PROSITE" id="PS00973">
    <property type="entry name" value="USP_2"/>
    <property type="match status" value="1"/>
</dbReference>
<dbReference type="PROSITE" id="PS50235">
    <property type="entry name" value="USP_3"/>
    <property type="match status" value="1"/>
</dbReference>
<feature type="chain" id="PRO_0000376821" description="Ubiquitin carboxyl-terminal hydrolase 4">
    <location>
        <begin position="1"/>
        <end position="882"/>
    </location>
</feature>
<feature type="domain" description="Rhodanese" evidence="2">
    <location>
        <begin position="182"/>
        <end position="308"/>
    </location>
</feature>
<feature type="domain" description="USP">
    <location>
        <begin position="519"/>
        <end position="879"/>
    </location>
</feature>
<feature type="region of interest" description="Disordered" evidence="5">
    <location>
        <begin position="382"/>
        <end position="411"/>
    </location>
</feature>
<feature type="compositionally biased region" description="Low complexity" evidence="5">
    <location>
        <begin position="382"/>
        <end position="399"/>
    </location>
</feature>
<feature type="compositionally biased region" description="Polar residues" evidence="5">
    <location>
        <begin position="402"/>
        <end position="411"/>
    </location>
</feature>
<feature type="active site" description="Nucleophile" evidence="3 4">
    <location>
        <position position="528"/>
    </location>
</feature>
<feature type="active site" description="Proton acceptor" evidence="3 4">
    <location>
        <position position="836"/>
    </location>
</feature>
<gene>
    <name type="primary">DOA4</name>
    <name type="synonym">UBP4</name>
    <name type="ORF">Kpol_1032p28</name>
</gene>
<protein>
    <recommendedName>
        <fullName>Ubiquitin carboxyl-terminal hydrolase 4</fullName>
        <ecNumber>3.4.19.12</ecNumber>
    </recommendedName>
    <alternativeName>
        <fullName>Deubiquitinating enzyme 4</fullName>
    </alternativeName>
    <alternativeName>
        <fullName>Ubiquitin thioesterase 4</fullName>
    </alternativeName>
    <alternativeName>
        <fullName>Ubiquitin-specific-processing protease 4</fullName>
    </alternativeName>
</protein>
<evidence type="ECO:0000250" key="1"/>
<evidence type="ECO:0000255" key="2">
    <source>
        <dbReference type="PROSITE-ProRule" id="PRU00173"/>
    </source>
</evidence>
<evidence type="ECO:0000255" key="3">
    <source>
        <dbReference type="PROSITE-ProRule" id="PRU10092"/>
    </source>
</evidence>
<evidence type="ECO:0000255" key="4">
    <source>
        <dbReference type="PROSITE-ProRule" id="PRU10093"/>
    </source>
</evidence>
<evidence type="ECO:0000256" key="5">
    <source>
        <dbReference type="SAM" id="MobiDB-lite"/>
    </source>
</evidence>
<evidence type="ECO:0000305" key="6"/>
<name>UBP4_VANPO</name>
<keyword id="KW-0963">Cytoplasm</keyword>
<keyword id="KW-0967">Endosome</keyword>
<keyword id="KW-0378">Hydrolase</keyword>
<keyword id="KW-0472">Membrane</keyword>
<keyword id="KW-0645">Protease</keyword>
<keyword id="KW-1185">Reference proteome</keyword>
<keyword id="KW-0788">Thiol protease</keyword>
<keyword id="KW-0833">Ubl conjugation pathway</keyword>
<reference key="1">
    <citation type="journal article" date="2007" name="Proc. Natl. Acad. Sci. U.S.A.">
        <title>Independent sorting-out of thousands of duplicated gene pairs in two yeast species descended from a whole-genome duplication.</title>
        <authorList>
            <person name="Scannell D.R."/>
            <person name="Frank A.C."/>
            <person name="Conant G.C."/>
            <person name="Byrne K.P."/>
            <person name="Woolfit M."/>
            <person name="Wolfe K.H."/>
        </authorList>
    </citation>
    <scope>NUCLEOTIDE SEQUENCE [LARGE SCALE GENOMIC DNA]</scope>
    <source>
        <strain>ATCC 22028 / DSM 70294 / BCRC 21397 / CBS 2163 / NBRC 10782 / NRRL Y-8283 / UCD 57-17</strain>
    </source>
</reference>